<organism>
    <name type="scientific">Bacillus subtilis (strain 168)</name>
    <dbReference type="NCBI Taxonomy" id="224308"/>
    <lineage>
        <taxon>Bacteria</taxon>
        <taxon>Bacillati</taxon>
        <taxon>Bacillota</taxon>
        <taxon>Bacilli</taxon>
        <taxon>Bacillales</taxon>
        <taxon>Bacillaceae</taxon>
        <taxon>Bacillus</taxon>
    </lineage>
</organism>
<name>YKUK_BACSU</name>
<feature type="chain" id="PRO_0000360737" description="Uncharacterized protein YkuK">
    <location>
        <begin position="1"/>
        <end position="172"/>
    </location>
</feature>
<keyword id="KW-1185">Reference proteome</keyword>
<gene>
    <name type="primary">ykuK</name>
    <name type="ordered locus">BSU14110</name>
</gene>
<dbReference type="EMBL" id="AJ222587">
    <property type="protein sequence ID" value="CAA10874.1"/>
    <property type="molecule type" value="Genomic_DNA"/>
</dbReference>
<dbReference type="EMBL" id="AL009126">
    <property type="protein sequence ID" value="CAB13284.1"/>
    <property type="molecule type" value="Genomic_DNA"/>
</dbReference>
<dbReference type="PIR" id="H69865">
    <property type="entry name" value="H69865"/>
</dbReference>
<dbReference type="RefSeq" id="NP_389294.1">
    <property type="nucleotide sequence ID" value="NC_000964.3"/>
</dbReference>
<dbReference type="RefSeq" id="WP_003232389.1">
    <property type="nucleotide sequence ID" value="NZ_OZ025638.1"/>
</dbReference>
<dbReference type="FunCoup" id="O34776">
    <property type="interactions" value="2"/>
</dbReference>
<dbReference type="STRING" id="224308.BSU14110"/>
<dbReference type="PaxDb" id="224308-BSU14110"/>
<dbReference type="EnsemblBacteria" id="CAB13284">
    <property type="protein sequence ID" value="CAB13284"/>
    <property type="gene ID" value="BSU_14110"/>
</dbReference>
<dbReference type="GeneID" id="939213"/>
<dbReference type="KEGG" id="bsu:BSU14110"/>
<dbReference type="PATRIC" id="fig|224308.179.peg.1540"/>
<dbReference type="eggNOG" id="COG1978">
    <property type="taxonomic scope" value="Bacteria"/>
</dbReference>
<dbReference type="InParanoid" id="O34776"/>
<dbReference type="OrthoDB" id="37369at2"/>
<dbReference type="BioCyc" id="BSUB:BSU14110-MONOMER"/>
<dbReference type="Proteomes" id="UP000001570">
    <property type="component" value="Chromosome"/>
</dbReference>
<dbReference type="InterPro" id="IPR007405">
    <property type="entry name" value="Phage_KVP40_Orf299"/>
</dbReference>
<dbReference type="PANTHER" id="PTHR39961:SF1">
    <property type="entry name" value="DUF458 DOMAIN-CONTAINING PROTEIN"/>
    <property type="match status" value="1"/>
</dbReference>
<dbReference type="PANTHER" id="PTHR39961">
    <property type="entry name" value="HYPOTHETICAL CYTOSOLIC PROTEIN"/>
    <property type="match status" value="1"/>
</dbReference>
<dbReference type="Pfam" id="PF04308">
    <property type="entry name" value="RNaseH_like"/>
    <property type="match status" value="1"/>
</dbReference>
<proteinExistence type="predicted"/>
<accession>O34776</accession>
<accession>Q796K3</accession>
<protein>
    <recommendedName>
        <fullName>Uncharacterized protein YkuK</fullName>
    </recommendedName>
</protein>
<reference key="1">
    <citation type="submission" date="1997-11" db="EMBL/GenBank/DDBJ databases">
        <title>Sequence of the Bacillus subtilis chromosome from ykuA to cse-15.</title>
        <authorList>
            <person name="Scanlan E."/>
            <person name="Devine K.M."/>
        </authorList>
    </citation>
    <scope>NUCLEOTIDE SEQUENCE [GENOMIC DNA]</scope>
    <source>
        <strain>168</strain>
    </source>
</reference>
<reference key="2">
    <citation type="journal article" date="1997" name="Nature">
        <title>The complete genome sequence of the Gram-positive bacterium Bacillus subtilis.</title>
        <authorList>
            <person name="Kunst F."/>
            <person name="Ogasawara N."/>
            <person name="Moszer I."/>
            <person name="Albertini A.M."/>
            <person name="Alloni G."/>
            <person name="Azevedo V."/>
            <person name="Bertero M.G."/>
            <person name="Bessieres P."/>
            <person name="Bolotin A."/>
            <person name="Borchert S."/>
            <person name="Borriss R."/>
            <person name="Boursier L."/>
            <person name="Brans A."/>
            <person name="Braun M."/>
            <person name="Brignell S.C."/>
            <person name="Bron S."/>
            <person name="Brouillet S."/>
            <person name="Bruschi C.V."/>
            <person name="Caldwell B."/>
            <person name="Capuano V."/>
            <person name="Carter N.M."/>
            <person name="Choi S.-K."/>
            <person name="Codani J.-J."/>
            <person name="Connerton I.F."/>
            <person name="Cummings N.J."/>
            <person name="Daniel R.A."/>
            <person name="Denizot F."/>
            <person name="Devine K.M."/>
            <person name="Duesterhoeft A."/>
            <person name="Ehrlich S.D."/>
            <person name="Emmerson P.T."/>
            <person name="Entian K.-D."/>
            <person name="Errington J."/>
            <person name="Fabret C."/>
            <person name="Ferrari E."/>
            <person name="Foulger D."/>
            <person name="Fritz C."/>
            <person name="Fujita M."/>
            <person name="Fujita Y."/>
            <person name="Fuma S."/>
            <person name="Galizzi A."/>
            <person name="Galleron N."/>
            <person name="Ghim S.-Y."/>
            <person name="Glaser P."/>
            <person name="Goffeau A."/>
            <person name="Golightly E.J."/>
            <person name="Grandi G."/>
            <person name="Guiseppi G."/>
            <person name="Guy B.J."/>
            <person name="Haga K."/>
            <person name="Haiech J."/>
            <person name="Harwood C.R."/>
            <person name="Henaut A."/>
            <person name="Hilbert H."/>
            <person name="Holsappel S."/>
            <person name="Hosono S."/>
            <person name="Hullo M.-F."/>
            <person name="Itaya M."/>
            <person name="Jones L.-M."/>
            <person name="Joris B."/>
            <person name="Karamata D."/>
            <person name="Kasahara Y."/>
            <person name="Klaerr-Blanchard M."/>
            <person name="Klein C."/>
            <person name="Kobayashi Y."/>
            <person name="Koetter P."/>
            <person name="Koningstein G."/>
            <person name="Krogh S."/>
            <person name="Kumano M."/>
            <person name="Kurita K."/>
            <person name="Lapidus A."/>
            <person name="Lardinois S."/>
            <person name="Lauber J."/>
            <person name="Lazarevic V."/>
            <person name="Lee S.-M."/>
            <person name="Levine A."/>
            <person name="Liu H."/>
            <person name="Masuda S."/>
            <person name="Mauel C."/>
            <person name="Medigue C."/>
            <person name="Medina N."/>
            <person name="Mellado R.P."/>
            <person name="Mizuno M."/>
            <person name="Moestl D."/>
            <person name="Nakai S."/>
            <person name="Noback M."/>
            <person name="Noone D."/>
            <person name="O'Reilly M."/>
            <person name="Ogawa K."/>
            <person name="Ogiwara A."/>
            <person name="Oudega B."/>
            <person name="Park S.-H."/>
            <person name="Parro V."/>
            <person name="Pohl T.M."/>
            <person name="Portetelle D."/>
            <person name="Porwollik S."/>
            <person name="Prescott A.M."/>
            <person name="Presecan E."/>
            <person name="Pujic P."/>
            <person name="Purnelle B."/>
            <person name="Rapoport G."/>
            <person name="Rey M."/>
            <person name="Reynolds S."/>
            <person name="Rieger M."/>
            <person name="Rivolta C."/>
            <person name="Rocha E."/>
            <person name="Roche B."/>
            <person name="Rose M."/>
            <person name="Sadaie Y."/>
            <person name="Sato T."/>
            <person name="Scanlan E."/>
            <person name="Schleich S."/>
            <person name="Schroeter R."/>
            <person name="Scoffone F."/>
            <person name="Sekiguchi J."/>
            <person name="Sekowska A."/>
            <person name="Seror S.J."/>
            <person name="Serror P."/>
            <person name="Shin B.-S."/>
            <person name="Soldo B."/>
            <person name="Sorokin A."/>
            <person name="Tacconi E."/>
            <person name="Takagi T."/>
            <person name="Takahashi H."/>
            <person name="Takemaru K."/>
            <person name="Takeuchi M."/>
            <person name="Tamakoshi A."/>
            <person name="Tanaka T."/>
            <person name="Terpstra P."/>
            <person name="Tognoni A."/>
            <person name="Tosato V."/>
            <person name="Uchiyama S."/>
            <person name="Vandenbol M."/>
            <person name="Vannier F."/>
            <person name="Vassarotti A."/>
            <person name="Viari A."/>
            <person name="Wambutt R."/>
            <person name="Wedler E."/>
            <person name="Wedler H."/>
            <person name="Weitzenegger T."/>
            <person name="Winters P."/>
            <person name="Wipat A."/>
            <person name="Yamamoto H."/>
            <person name="Yamane K."/>
            <person name="Yasumoto K."/>
            <person name="Yata K."/>
            <person name="Yoshida K."/>
            <person name="Yoshikawa H.-F."/>
            <person name="Zumstein E."/>
            <person name="Yoshikawa H."/>
            <person name="Danchin A."/>
        </authorList>
    </citation>
    <scope>NUCLEOTIDE SEQUENCE [LARGE SCALE GENOMIC DNA]</scope>
    <source>
        <strain>168</strain>
    </source>
</reference>
<sequence length="172" mass="19486">MADSFLFYNLSEAQMTFQDVMERLKAFVQKDPRSSYVLSIGTDSQVYRDYTKFITALHLHRTGKGAWGCLKNHTVDRPIHSLREKISLETAYSQETAAHILDGHLMDITDLLLPFTGEGADLTFEVHLDIGKKGLTKDLIQEMTGRITSMGIEAKIKPDSYTAFSYANRFTK</sequence>